<sequence length="383" mass="41380">MAKHLFTSESVSEGHPDKIADQISDAVLDAILAQDPKARVACETYVKTGMVLVGGEVTTSAWVDIEELTRKTVREIGYIHSDMGFDADSCAVLNAIGKQSPDINQGVDRADPKEQGAGDQGLMFGYASNETDILMPAPITYAHALVKRQSEVRKNGTLPWLRPDAKSQVTFAYEDNKIVGIDAIVLSTQHSPDIAQADLIEGVMETIIKPVLPAQWLNKDTKYFINPTGRFVIGGPMGDCGLTGRKIIVDTYGGMARHGGGAFSGKDPSKVDRSAAYAARYVAKNIVAAGLADRCEIQVSYAIGVAEPTSISVETFGTGKVSEEVLIKLVRQHFDLRPYGLTEMLNLARPIYQATAAYGHFGRSEFPWEATDKAEALRADAAL</sequence>
<name>METK_SHEON</name>
<accession>Q8EIB4</accession>
<proteinExistence type="inferred from homology"/>
<comment type="function">
    <text evidence="1">Catalyzes the formation of S-adenosylmethionine (AdoMet) from methionine and ATP. The overall synthetic reaction is composed of two sequential steps, AdoMet formation and the subsequent tripolyphosphate hydrolysis which occurs prior to release of AdoMet from the enzyme.</text>
</comment>
<comment type="catalytic activity">
    <reaction evidence="1">
        <text>L-methionine + ATP + H2O = S-adenosyl-L-methionine + phosphate + diphosphate</text>
        <dbReference type="Rhea" id="RHEA:21080"/>
        <dbReference type="ChEBI" id="CHEBI:15377"/>
        <dbReference type="ChEBI" id="CHEBI:30616"/>
        <dbReference type="ChEBI" id="CHEBI:33019"/>
        <dbReference type="ChEBI" id="CHEBI:43474"/>
        <dbReference type="ChEBI" id="CHEBI:57844"/>
        <dbReference type="ChEBI" id="CHEBI:59789"/>
        <dbReference type="EC" id="2.5.1.6"/>
    </reaction>
</comment>
<comment type="cofactor">
    <cofactor evidence="1">
        <name>Mg(2+)</name>
        <dbReference type="ChEBI" id="CHEBI:18420"/>
    </cofactor>
    <text evidence="1">Binds 2 divalent ions per subunit.</text>
</comment>
<comment type="cofactor">
    <cofactor evidence="1">
        <name>K(+)</name>
        <dbReference type="ChEBI" id="CHEBI:29103"/>
    </cofactor>
    <text evidence="1">Binds 1 potassium ion per subunit.</text>
</comment>
<comment type="pathway">
    <text evidence="1">Amino-acid biosynthesis; S-adenosyl-L-methionine biosynthesis; S-adenosyl-L-methionine from L-methionine: step 1/1.</text>
</comment>
<comment type="subunit">
    <text evidence="1">Homotetramer; dimer of dimers.</text>
</comment>
<comment type="subcellular location">
    <subcellularLocation>
        <location evidence="1">Cytoplasm</location>
    </subcellularLocation>
</comment>
<comment type="similarity">
    <text evidence="1">Belongs to the AdoMet synthase family.</text>
</comment>
<dbReference type="EC" id="2.5.1.6" evidence="1"/>
<dbReference type="EMBL" id="AE014299">
    <property type="protein sequence ID" value="AAN54003.1"/>
    <property type="molecule type" value="Genomic_DNA"/>
</dbReference>
<dbReference type="RefSeq" id="NP_716558.1">
    <property type="nucleotide sequence ID" value="NC_004347.2"/>
</dbReference>
<dbReference type="RefSeq" id="WP_011071209.1">
    <property type="nucleotide sequence ID" value="NC_004347.2"/>
</dbReference>
<dbReference type="SMR" id="Q8EIB4"/>
<dbReference type="STRING" id="211586.SO_0929"/>
<dbReference type="PaxDb" id="211586-SO_0929"/>
<dbReference type="KEGG" id="son:SO_0929"/>
<dbReference type="PATRIC" id="fig|211586.12.peg.891"/>
<dbReference type="eggNOG" id="COG0192">
    <property type="taxonomic scope" value="Bacteria"/>
</dbReference>
<dbReference type="HOGENOM" id="CLU_041802_1_1_6"/>
<dbReference type="OrthoDB" id="9801686at2"/>
<dbReference type="PhylomeDB" id="Q8EIB4"/>
<dbReference type="BioCyc" id="SONE211586:G1GMP-866-MONOMER"/>
<dbReference type="UniPathway" id="UPA00315">
    <property type="reaction ID" value="UER00080"/>
</dbReference>
<dbReference type="Proteomes" id="UP000008186">
    <property type="component" value="Chromosome"/>
</dbReference>
<dbReference type="GO" id="GO:0005829">
    <property type="term" value="C:cytosol"/>
    <property type="evidence" value="ECO:0000318"/>
    <property type="project" value="GO_Central"/>
</dbReference>
<dbReference type="GO" id="GO:0005524">
    <property type="term" value="F:ATP binding"/>
    <property type="evidence" value="ECO:0007669"/>
    <property type="project" value="UniProtKB-UniRule"/>
</dbReference>
<dbReference type="GO" id="GO:0000287">
    <property type="term" value="F:magnesium ion binding"/>
    <property type="evidence" value="ECO:0007669"/>
    <property type="project" value="UniProtKB-UniRule"/>
</dbReference>
<dbReference type="GO" id="GO:0004478">
    <property type="term" value="F:methionine adenosyltransferase activity"/>
    <property type="evidence" value="ECO:0000318"/>
    <property type="project" value="GO_Central"/>
</dbReference>
<dbReference type="GO" id="GO:0006730">
    <property type="term" value="P:one-carbon metabolic process"/>
    <property type="evidence" value="ECO:0007669"/>
    <property type="project" value="UniProtKB-KW"/>
</dbReference>
<dbReference type="GO" id="GO:0006556">
    <property type="term" value="P:S-adenosylmethionine biosynthetic process"/>
    <property type="evidence" value="ECO:0000318"/>
    <property type="project" value="GO_Central"/>
</dbReference>
<dbReference type="CDD" id="cd18079">
    <property type="entry name" value="S-AdoMet_synt"/>
    <property type="match status" value="1"/>
</dbReference>
<dbReference type="FunFam" id="3.30.300.10:FF:000001">
    <property type="entry name" value="S-adenosylmethionine synthase"/>
    <property type="match status" value="1"/>
</dbReference>
<dbReference type="FunFam" id="3.30.300.10:FF:000003">
    <property type="entry name" value="S-adenosylmethionine synthase"/>
    <property type="match status" value="1"/>
</dbReference>
<dbReference type="FunFam" id="3.30.300.10:FF:000004">
    <property type="entry name" value="S-adenosylmethionine synthase"/>
    <property type="match status" value="1"/>
</dbReference>
<dbReference type="Gene3D" id="3.30.300.10">
    <property type="match status" value="3"/>
</dbReference>
<dbReference type="HAMAP" id="MF_00086">
    <property type="entry name" value="S_AdoMet_synth1"/>
    <property type="match status" value="1"/>
</dbReference>
<dbReference type="InterPro" id="IPR022631">
    <property type="entry name" value="ADOMET_SYNTHASE_CS"/>
</dbReference>
<dbReference type="InterPro" id="IPR022630">
    <property type="entry name" value="S-AdoMet_synt_C"/>
</dbReference>
<dbReference type="InterPro" id="IPR022629">
    <property type="entry name" value="S-AdoMet_synt_central"/>
</dbReference>
<dbReference type="InterPro" id="IPR022628">
    <property type="entry name" value="S-AdoMet_synt_N"/>
</dbReference>
<dbReference type="InterPro" id="IPR002133">
    <property type="entry name" value="S-AdoMet_synthetase"/>
</dbReference>
<dbReference type="InterPro" id="IPR022636">
    <property type="entry name" value="S-AdoMet_synthetase_sfam"/>
</dbReference>
<dbReference type="NCBIfam" id="TIGR01034">
    <property type="entry name" value="metK"/>
    <property type="match status" value="1"/>
</dbReference>
<dbReference type="PANTHER" id="PTHR11964">
    <property type="entry name" value="S-ADENOSYLMETHIONINE SYNTHETASE"/>
    <property type="match status" value="1"/>
</dbReference>
<dbReference type="Pfam" id="PF02773">
    <property type="entry name" value="S-AdoMet_synt_C"/>
    <property type="match status" value="1"/>
</dbReference>
<dbReference type="Pfam" id="PF02772">
    <property type="entry name" value="S-AdoMet_synt_M"/>
    <property type="match status" value="1"/>
</dbReference>
<dbReference type="Pfam" id="PF00438">
    <property type="entry name" value="S-AdoMet_synt_N"/>
    <property type="match status" value="1"/>
</dbReference>
<dbReference type="PIRSF" id="PIRSF000497">
    <property type="entry name" value="MAT"/>
    <property type="match status" value="1"/>
</dbReference>
<dbReference type="SUPFAM" id="SSF55973">
    <property type="entry name" value="S-adenosylmethionine synthetase"/>
    <property type="match status" value="3"/>
</dbReference>
<dbReference type="PROSITE" id="PS00376">
    <property type="entry name" value="ADOMET_SYNTHASE_1"/>
    <property type="match status" value="1"/>
</dbReference>
<dbReference type="PROSITE" id="PS00377">
    <property type="entry name" value="ADOMET_SYNTHASE_2"/>
    <property type="match status" value="1"/>
</dbReference>
<gene>
    <name evidence="1" type="primary">metK</name>
    <name type="ordered locus">SO_0929</name>
</gene>
<organism>
    <name type="scientific">Shewanella oneidensis (strain ATCC 700550 / JCM 31522 / CIP 106686 / LMG 19005 / NCIMB 14063 / MR-1)</name>
    <dbReference type="NCBI Taxonomy" id="211586"/>
    <lineage>
        <taxon>Bacteria</taxon>
        <taxon>Pseudomonadati</taxon>
        <taxon>Pseudomonadota</taxon>
        <taxon>Gammaproteobacteria</taxon>
        <taxon>Alteromonadales</taxon>
        <taxon>Shewanellaceae</taxon>
        <taxon>Shewanella</taxon>
    </lineage>
</organism>
<protein>
    <recommendedName>
        <fullName evidence="1">S-adenosylmethionine synthase</fullName>
        <shortName evidence="1">AdoMet synthase</shortName>
        <ecNumber evidence="1">2.5.1.6</ecNumber>
    </recommendedName>
    <alternativeName>
        <fullName evidence="1">MAT</fullName>
    </alternativeName>
    <alternativeName>
        <fullName evidence="1">Methionine adenosyltransferase</fullName>
    </alternativeName>
</protein>
<feature type="chain" id="PRO_0000174583" description="S-adenosylmethionine synthase">
    <location>
        <begin position="1"/>
        <end position="383"/>
    </location>
</feature>
<feature type="region of interest" description="Flexible loop" evidence="1">
    <location>
        <begin position="99"/>
        <end position="109"/>
    </location>
</feature>
<feature type="binding site" description="in other chain" evidence="1">
    <location>
        <position position="15"/>
    </location>
    <ligand>
        <name>ATP</name>
        <dbReference type="ChEBI" id="CHEBI:30616"/>
        <note>ligand shared between two neighboring subunits</note>
    </ligand>
</feature>
<feature type="binding site" evidence="1">
    <location>
        <position position="17"/>
    </location>
    <ligand>
        <name>Mg(2+)</name>
        <dbReference type="ChEBI" id="CHEBI:18420"/>
    </ligand>
</feature>
<feature type="binding site" evidence="1">
    <location>
        <position position="43"/>
    </location>
    <ligand>
        <name>K(+)</name>
        <dbReference type="ChEBI" id="CHEBI:29103"/>
    </ligand>
</feature>
<feature type="binding site" description="in other chain" evidence="1">
    <location>
        <position position="56"/>
    </location>
    <ligand>
        <name>L-methionine</name>
        <dbReference type="ChEBI" id="CHEBI:57844"/>
        <note>ligand shared between two neighboring subunits</note>
    </ligand>
</feature>
<feature type="binding site" description="in other chain" evidence="1">
    <location>
        <position position="99"/>
    </location>
    <ligand>
        <name>L-methionine</name>
        <dbReference type="ChEBI" id="CHEBI:57844"/>
        <note>ligand shared between two neighboring subunits</note>
    </ligand>
</feature>
<feature type="binding site" description="in other chain" evidence="1">
    <location>
        <begin position="164"/>
        <end position="166"/>
    </location>
    <ligand>
        <name>ATP</name>
        <dbReference type="ChEBI" id="CHEBI:30616"/>
        <note>ligand shared between two neighboring subunits</note>
    </ligand>
</feature>
<feature type="binding site" description="in other chain" evidence="1">
    <location>
        <begin position="230"/>
        <end position="231"/>
    </location>
    <ligand>
        <name>ATP</name>
        <dbReference type="ChEBI" id="CHEBI:30616"/>
        <note>ligand shared between two neighboring subunits</note>
    </ligand>
</feature>
<feature type="binding site" evidence="1">
    <location>
        <position position="239"/>
    </location>
    <ligand>
        <name>ATP</name>
        <dbReference type="ChEBI" id="CHEBI:30616"/>
        <note>ligand shared between two neighboring subunits</note>
    </ligand>
</feature>
<feature type="binding site" evidence="1">
    <location>
        <position position="239"/>
    </location>
    <ligand>
        <name>L-methionine</name>
        <dbReference type="ChEBI" id="CHEBI:57844"/>
        <note>ligand shared between two neighboring subunits</note>
    </ligand>
</feature>
<feature type="binding site" description="in other chain" evidence="1">
    <location>
        <begin position="245"/>
        <end position="246"/>
    </location>
    <ligand>
        <name>ATP</name>
        <dbReference type="ChEBI" id="CHEBI:30616"/>
        <note>ligand shared between two neighboring subunits</note>
    </ligand>
</feature>
<feature type="binding site" evidence="1">
    <location>
        <position position="262"/>
    </location>
    <ligand>
        <name>ATP</name>
        <dbReference type="ChEBI" id="CHEBI:30616"/>
        <note>ligand shared between two neighboring subunits</note>
    </ligand>
</feature>
<feature type="binding site" evidence="1">
    <location>
        <position position="266"/>
    </location>
    <ligand>
        <name>ATP</name>
        <dbReference type="ChEBI" id="CHEBI:30616"/>
        <note>ligand shared between two neighboring subunits</note>
    </ligand>
</feature>
<feature type="binding site" description="in other chain" evidence="1">
    <location>
        <position position="270"/>
    </location>
    <ligand>
        <name>L-methionine</name>
        <dbReference type="ChEBI" id="CHEBI:57844"/>
        <note>ligand shared between two neighboring subunits</note>
    </ligand>
</feature>
<keyword id="KW-0067">ATP-binding</keyword>
<keyword id="KW-0963">Cytoplasm</keyword>
<keyword id="KW-0460">Magnesium</keyword>
<keyword id="KW-0479">Metal-binding</keyword>
<keyword id="KW-0547">Nucleotide-binding</keyword>
<keyword id="KW-0554">One-carbon metabolism</keyword>
<keyword id="KW-0630">Potassium</keyword>
<keyword id="KW-1185">Reference proteome</keyword>
<keyword id="KW-0808">Transferase</keyword>
<evidence type="ECO:0000255" key="1">
    <source>
        <dbReference type="HAMAP-Rule" id="MF_00086"/>
    </source>
</evidence>
<reference key="1">
    <citation type="journal article" date="2002" name="Nat. Biotechnol.">
        <title>Genome sequence of the dissimilatory metal ion-reducing bacterium Shewanella oneidensis.</title>
        <authorList>
            <person name="Heidelberg J.F."/>
            <person name="Paulsen I.T."/>
            <person name="Nelson K.E."/>
            <person name="Gaidos E.J."/>
            <person name="Nelson W.C."/>
            <person name="Read T.D."/>
            <person name="Eisen J.A."/>
            <person name="Seshadri R."/>
            <person name="Ward N.L."/>
            <person name="Methe B.A."/>
            <person name="Clayton R.A."/>
            <person name="Meyer T."/>
            <person name="Tsapin A."/>
            <person name="Scott J."/>
            <person name="Beanan M.J."/>
            <person name="Brinkac L.M."/>
            <person name="Daugherty S.C."/>
            <person name="DeBoy R.T."/>
            <person name="Dodson R.J."/>
            <person name="Durkin A.S."/>
            <person name="Haft D.H."/>
            <person name="Kolonay J.F."/>
            <person name="Madupu R."/>
            <person name="Peterson J.D."/>
            <person name="Umayam L.A."/>
            <person name="White O."/>
            <person name="Wolf A.M."/>
            <person name="Vamathevan J.J."/>
            <person name="Weidman J.F."/>
            <person name="Impraim M."/>
            <person name="Lee K."/>
            <person name="Berry K.J."/>
            <person name="Lee C."/>
            <person name="Mueller J."/>
            <person name="Khouri H.M."/>
            <person name="Gill J."/>
            <person name="Utterback T.R."/>
            <person name="McDonald L.A."/>
            <person name="Feldblyum T.V."/>
            <person name="Smith H.O."/>
            <person name="Venter J.C."/>
            <person name="Nealson K.H."/>
            <person name="Fraser C.M."/>
        </authorList>
    </citation>
    <scope>NUCLEOTIDE SEQUENCE [LARGE SCALE GENOMIC DNA]</scope>
    <source>
        <strain>ATCC 700550 / JCM 31522 / CIP 106686 / LMG 19005 / NCIMB 14063 / MR-1</strain>
    </source>
</reference>